<accession>Q1IYA6</accession>
<gene>
    <name evidence="1" type="primary">rpsP</name>
    <name type="ordered locus">Dgeo_1483</name>
</gene>
<feature type="chain" id="PRO_1000049250" description="Small ribosomal subunit protein bS16">
    <location>
        <begin position="1"/>
        <end position="82"/>
    </location>
</feature>
<sequence>MVKIRLSRFGSTHNPHYRIVVTDSRRPRDGGYIENLGHYDPRKTTENYLKINAERAAYWLSVGAQPTQTARRLLKAQGVKVA</sequence>
<protein>
    <recommendedName>
        <fullName evidence="1">Small ribosomal subunit protein bS16</fullName>
    </recommendedName>
    <alternativeName>
        <fullName evidence="2">30S ribosomal protein S16</fullName>
    </alternativeName>
</protein>
<proteinExistence type="inferred from homology"/>
<evidence type="ECO:0000255" key="1">
    <source>
        <dbReference type="HAMAP-Rule" id="MF_00385"/>
    </source>
</evidence>
<evidence type="ECO:0000305" key="2"/>
<keyword id="KW-0687">Ribonucleoprotein</keyword>
<keyword id="KW-0689">Ribosomal protein</keyword>
<reference key="1">
    <citation type="submission" date="2006-04" db="EMBL/GenBank/DDBJ databases">
        <title>Complete sequence of chromosome of Deinococcus geothermalis DSM 11300.</title>
        <authorList>
            <person name="Copeland A."/>
            <person name="Lucas S."/>
            <person name="Lapidus A."/>
            <person name="Barry K."/>
            <person name="Detter J.C."/>
            <person name="Glavina del Rio T."/>
            <person name="Hammon N."/>
            <person name="Israni S."/>
            <person name="Dalin E."/>
            <person name="Tice H."/>
            <person name="Pitluck S."/>
            <person name="Brettin T."/>
            <person name="Bruce D."/>
            <person name="Han C."/>
            <person name="Tapia R."/>
            <person name="Saunders E."/>
            <person name="Gilna P."/>
            <person name="Schmutz J."/>
            <person name="Larimer F."/>
            <person name="Land M."/>
            <person name="Hauser L."/>
            <person name="Kyrpides N."/>
            <person name="Kim E."/>
            <person name="Daly M.J."/>
            <person name="Fredrickson J.K."/>
            <person name="Makarova K.S."/>
            <person name="Gaidamakova E.K."/>
            <person name="Zhai M."/>
            <person name="Richardson P."/>
        </authorList>
    </citation>
    <scope>NUCLEOTIDE SEQUENCE [LARGE SCALE GENOMIC DNA]</scope>
    <source>
        <strain>DSM 11300 / CIP 105573 / AG-3a</strain>
    </source>
</reference>
<organism>
    <name type="scientific">Deinococcus geothermalis (strain DSM 11300 / CIP 105573 / AG-3a)</name>
    <dbReference type="NCBI Taxonomy" id="319795"/>
    <lineage>
        <taxon>Bacteria</taxon>
        <taxon>Thermotogati</taxon>
        <taxon>Deinococcota</taxon>
        <taxon>Deinococci</taxon>
        <taxon>Deinococcales</taxon>
        <taxon>Deinococcaceae</taxon>
        <taxon>Deinococcus</taxon>
    </lineage>
</organism>
<dbReference type="EMBL" id="CP000359">
    <property type="protein sequence ID" value="ABF45778.1"/>
    <property type="molecule type" value="Genomic_DNA"/>
</dbReference>
<dbReference type="RefSeq" id="WP_011530612.1">
    <property type="nucleotide sequence ID" value="NC_008025.1"/>
</dbReference>
<dbReference type="SMR" id="Q1IYA6"/>
<dbReference type="STRING" id="319795.Dgeo_1483"/>
<dbReference type="KEGG" id="dge:Dgeo_1483"/>
<dbReference type="eggNOG" id="COG0228">
    <property type="taxonomic scope" value="Bacteria"/>
</dbReference>
<dbReference type="HOGENOM" id="CLU_100590_5_0_0"/>
<dbReference type="Proteomes" id="UP000002431">
    <property type="component" value="Chromosome"/>
</dbReference>
<dbReference type="GO" id="GO:0005737">
    <property type="term" value="C:cytoplasm"/>
    <property type="evidence" value="ECO:0007669"/>
    <property type="project" value="UniProtKB-ARBA"/>
</dbReference>
<dbReference type="GO" id="GO:0015935">
    <property type="term" value="C:small ribosomal subunit"/>
    <property type="evidence" value="ECO:0007669"/>
    <property type="project" value="TreeGrafter"/>
</dbReference>
<dbReference type="GO" id="GO:0003735">
    <property type="term" value="F:structural constituent of ribosome"/>
    <property type="evidence" value="ECO:0007669"/>
    <property type="project" value="InterPro"/>
</dbReference>
<dbReference type="GO" id="GO:0006412">
    <property type="term" value="P:translation"/>
    <property type="evidence" value="ECO:0007669"/>
    <property type="project" value="UniProtKB-UniRule"/>
</dbReference>
<dbReference type="FunFam" id="3.30.1320.10:FF:000005">
    <property type="entry name" value="30S ribosomal protein S16"/>
    <property type="match status" value="1"/>
</dbReference>
<dbReference type="Gene3D" id="3.30.1320.10">
    <property type="match status" value="1"/>
</dbReference>
<dbReference type="HAMAP" id="MF_00385">
    <property type="entry name" value="Ribosomal_bS16"/>
    <property type="match status" value="1"/>
</dbReference>
<dbReference type="InterPro" id="IPR000307">
    <property type="entry name" value="Ribosomal_bS16"/>
</dbReference>
<dbReference type="InterPro" id="IPR023803">
    <property type="entry name" value="Ribosomal_bS16_dom_sf"/>
</dbReference>
<dbReference type="NCBIfam" id="TIGR00002">
    <property type="entry name" value="S16"/>
    <property type="match status" value="1"/>
</dbReference>
<dbReference type="PANTHER" id="PTHR12919">
    <property type="entry name" value="30S RIBOSOMAL PROTEIN S16"/>
    <property type="match status" value="1"/>
</dbReference>
<dbReference type="PANTHER" id="PTHR12919:SF20">
    <property type="entry name" value="SMALL RIBOSOMAL SUBUNIT PROTEIN BS16M"/>
    <property type="match status" value="1"/>
</dbReference>
<dbReference type="Pfam" id="PF00886">
    <property type="entry name" value="Ribosomal_S16"/>
    <property type="match status" value="1"/>
</dbReference>
<dbReference type="SUPFAM" id="SSF54565">
    <property type="entry name" value="Ribosomal protein S16"/>
    <property type="match status" value="1"/>
</dbReference>
<comment type="similarity">
    <text evidence="1">Belongs to the bacterial ribosomal protein bS16 family.</text>
</comment>
<name>RS16_DEIGD</name>